<name>RLPA_SALTI</name>
<comment type="function">
    <text evidence="1">Lytic transglycosylase with a strong preference for naked glycan strands that lack stem peptides.</text>
</comment>
<comment type="subcellular location">
    <subcellularLocation>
        <location evidence="1">Cell membrane</location>
        <topology evidence="1">Lipid-anchor</topology>
    </subcellularLocation>
</comment>
<comment type="similarity">
    <text evidence="1">Belongs to the RlpA family.</text>
</comment>
<gene>
    <name evidence="1" type="primary">rlpA</name>
    <name type="ordered locus">STY0689</name>
    <name type="ordered locus">t2229</name>
</gene>
<accession>Q8Z8I0</accession>
<protein>
    <recommendedName>
        <fullName evidence="1">Endolytic peptidoglycan transglycosylase RlpA</fullName>
        <ecNumber evidence="1">4.2.2.-</ecNumber>
    </recommendedName>
    <alternativeName>
        <fullName>Rare lipoprotein A</fullName>
    </alternativeName>
</protein>
<dbReference type="EC" id="4.2.2.-" evidence="1"/>
<dbReference type="EMBL" id="AL513382">
    <property type="protein sequence ID" value="CAD05115.1"/>
    <property type="molecule type" value="Genomic_DNA"/>
</dbReference>
<dbReference type="EMBL" id="AE014613">
    <property type="protein sequence ID" value="AAO69832.1"/>
    <property type="molecule type" value="Genomic_DNA"/>
</dbReference>
<dbReference type="RefSeq" id="NP_455214.1">
    <property type="nucleotide sequence ID" value="NC_003198.1"/>
</dbReference>
<dbReference type="RefSeq" id="WP_000549517.1">
    <property type="nucleotide sequence ID" value="NZ_WSUR01000015.1"/>
</dbReference>
<dbReference type="SMR" id="Q8Z8I0"/>
<dbReference type="STRING" id="220341.gene:17584696"/>
<dbReference type="KEGG" id="stt:t2229"/>
<dbReference type="KEGG" id="sty:STY0689"/>
<dbReference type="PATRIC" id="fig|220341.7.peg.692"/>
<dbReference type="eggNOG" id="COG0797">
    <property type="taxonomic scope" value="Bacteria"/>
</dbReference>
<dbReference type="HOGENOM" id="CLU_042923_3_0_6"/>
<dbReference type="OMA" id="PFYSDRI"/>
<dbReference type="OrthoDB" id="9779128at2"/>
<dbReference type="Proteomes" id="UP000000541">
    <property type="component" value="Chromosome"/>
</dbReference>
<dbReference type="Proteomes" id="UP000002670">
    <property type="component" value="Chromosome"/>
</dbReference>
<dbReference type="GO" id="GO:0009279">
    <property type="term" value="C:cell outer membrane"/>
    <property type="evidence" value="ECO:0007669"/>
    <property type="project" value="TreeGrafter"/>
</dbReference>
<dbReference type="GO" id="GO:0005886">
    <property type="term" value="C:plasma membrane"/>
    <property type="evidence" value="ECO:0007669"/>
    <property type="project" value="UniProtKB-SubCell"/>
</dbReference>
<dbReference type="GO" id="GO:0008932">
    <property type="term" value="F:lytic endotransglycosylase activity"/>
    <property type="evidence" value="ECO:0007669"/>
    <property type="project" value="UniProtKB-UniRule"/>
</dbReference>
<dbReference type="GO" id="GO:0042834">
    <property type="term" value="F:peptidoglycan binding"/>
    <property type="evidence" value="ECO:0007669"/>
    <property type="project" value="InterPro"/>
</dbReference>
<dbReference type="GO" id="GO:0071555">
    <property type="term" value="P:cell wall organization"/>
    <property type="evidence" value="ECO:0007669"/>
    <property type="project" value="UniProtKB-KW"/>
</dbReference>
<dbReference type="GO" id="GO:0000270">
    <property type="term" value="P:peptidoglycan metabolic process"/>
    <property type="evidence" value="ECO:0007669"/>
    <property type="project" value="UniProtKB-UniRule"/>
</dbReference>
<dbReference type="CDD" id="cd22268">
    <property type="entry name" value="DPBB_RlpA-like"/>
    <property type="match status" value="1"/>
</dbReference>
<dbReference type="FunFam" id="2.40.40.10:FF:000003">
    <property type="entry name" value="Endolytic peptidoglycan transglycosylase RlpA"/>
    <property type="match status" value="1"/>
</dbReference>
<dbReference type="FunFam" id="3.30.70.1070:FF:000003">
    <property type="entry name" value="Endolytic peptidoglycan transglycosylase RlpA"/>
    <property type="match status" value="1"/>
</dbReference>
<dbReference type="Gene3D" id="2.40.40.10">
    <property type="entry name" value="RlpA-like domain"/>
    <property type="match status" value="1"/>
</dbReference>
<dbReference type="Gene3D" id="3.30.70.1070">
    <property type="entry name" value="Sporulation related repeat"/>
    <property type="match status" value="1"/>
</dbReference>
<dbReference type="HAMAP" id="MF_02071">
    <property type="entry name" value="RlpA"/>
    <property type="match status" value="1"/>
</dbReference>
<dbReference type="InterPro" id="IPR034718">
    <property type="entry name" value="RlpA"/>
</dbReference>
<dbReference type="InterPro" id="IPR009009">
    <property type="entry name" value="RlpA-like_DPBB"/>
</dbReference>
<dbReference type="InterPro" id="IPR036908">
    <property type="entry name" value="RlpA-like_sf"/>
</dbReference>
<dbReference type="InterPro" id="IPR012997">
    <property type="entry name" value="RplA"/>
</dbReference>
<dbReference type="InterPro" id="IPR007730">
    <property type="entry name" value="SPOR-like_dom"/>
</dbReference>
<dbReference type="InterPro" id="IPR036680">
    <property type="entry name" value="SPOR-like_sf"/>
</dbReference>
<dbReference type="NCBIfam" id="NF007953">
    <property type="entry name" value="PRK10672.1"/>
    <property type="match status" value="1"/>
</dbReference>
<dbReference type="NCBIfam" id="TIGR00413">
    <property type="entry name" value="rlpA"/>
    <property type="match status" value="1"/>
</dbReference>
<dbReference type="PANTHER" id="PTHR34183">
    <property type="entry name" value="ENDOLYTIC PEPTIDOGLYCAN TRANSGLYCOSYLASE RLPA"/>
    <property type="match status" value="1"/>
</dbReference>
<dbReference type="PANTHER" id="PTHR34183:SF1">
    <property type="entry name" value="ENDOLYTIC PEPTIDOGLYCAN TRANSGLYCOSYLASE RLPA"/>
    <property type="match status" value="1"/>
</dbReference>
<dbReference type="Pfam" id="PF03330">
    <property type="entry name" value="DPBB_1"/>
    <property type="match status" value="1"/>
</dbReference>
<dbReference type="Pfam" id="PF05036">
    <property type="entry name" value="SPOR"/>
    <property type="match status" value="1"/>
</dbReference>
<dbReference type="SUPFAM" id="SSF50685">
    <property type="entry name" value="Barwin-like endoglucanases"/>
    <property type="match status" value="1"/>
</dbReference>
<dbReference type="SUPFAM" id="SSF110997">
    <property type="entry name" value="Sporulation related repeat"/>
    <property type="match status" value="1"/>
</dbReference>
<dbReference type="PROSITE" id="PS51257">
    <property type="entry name" value="PROKAR_LIPOPROTEIN"/>
    <property type="match status" value="1"/>
</dbReference>
<dbReference type="PROSITE" id="PS51724">
    <property type="entry name" value="SPOR"/>
    <property type="match status" value="1"/>
</dbReference>
<organism>
    <name type="scientific">Salmonella typhi</name>
    <dbReference type="NCBI Taxonomy" id="90370"/>
    <lineage>
        <taxon>Bacteria</taxon>
        <taxon>Pseudomonadati</taxon>
        <taxon>Pseudomonadota</taxon>
        <taxon>Gammaproteobacteria</taxon>
        <taxon>Enterobacterales</taxon>
        <taxon>Enterobacteriaceae</taxon>
        <taxon>Salmonella</taxon>
    </lineage>
</organism>
<proteinExistence type="inferred from homology"/>
<keyword id="KW-1003">Cell membrane</keyword>
<keyword id="KW-0961">Cell wall biogenesis/degradation</keyword>
<keyword id="KW-0449">Lipoprotein</keyword>
<keyword id="KW-0456">Lyase</keyword>
<keyword id="KW-0472">Membrane</keyword>
<keyword id="KW-0564">Palmitate</keyword>
<keyword id="KW-0732">Signal</keyword>
<evidence type="ECO:0000255" key="1">
    <source>
        <dbReference type="HAMAP-Rule" id="MF_02071"/>
    </source>
</evidence>
<evidence type="ECO:0000256" key="2">
    <source>
        <dbReference type="SAM" id="MobiDB-lite"/>
    </source>
</evidence>
<reference key="1">
    <citation type="journal article" date="2001" name="Nature">
        <title>Complete genome sequence of a multiple drug resistant Salmonella enterica serovar Typhi CT18.</title>
        <authorList>
            <person name="Parkhill J."/>
            <person name="Dougan G."/>
            <person name="James K.D."/>
            <person name="Thomson N.R."/>
            <person name="Pickard D."/>
            <person name="Wain J."/>
            <person name="Churcher C.M."/>
            <person name="Mungall K.L."/>
            <person name="Bentley S.D."/>
            <person name="Holden M.T.G."/>
            <person name="Sebaihia M."/>
            <person name="Baker S."/>
            <person name="Basham D."/>
            <person name="Brooks K."/>
            <person name="Chillingworth T."/>
            <person name="Connerton P."/>
            <person name="Cronin A."/>
            <person name="Davis P."/>
            <person name="Davies R.M."/>
            <person name="Dowd L."/>
            <person name="White N."/>
            <person name="Farrar J."/>
            <person name="Feltwell T."/>
            <person name="Hamlin N."/>
            <person name="Haque A."/>
            <person name="Hien T.T."/>
            <person name="Holroyd S."/>
            <person name="Jagels K."/>
            <person name="Krogh A."/>
            <person name="Larsen T.S."/>
            <person name="Leather S."/>
            <person name="Moule S."/>
            <person name="O'Gaora P."/>
            <person name="Parry C."/>
            <person name="Quail M.A."/>
            <person name="Rutherford K.M."/>
            <person name="Simmonds M."/>
            <person name="Skelton J."/>
            <person name="Stevens K."/>
            <person name="Whitehead S."/>
            <person name="Barrell B.G."/>
        </authorList>
    </citation>
    <scope>NUCLEOTIDE SEQUENCE [LARGE SCALE GENOMIC DNA]</scope>
    <source>
        <strain>CT18</strain>
    </source>
</reference>
<reference key="2">
    <citation type="journal article" date="2003" name="J. Bacteriol.">
        <title>Comparative genomics of Salmonella enterica serovar Typhi strains Ty2 and CT18.</title>
        <authorList>
            <person name="Deng W."/>
            <person name="Liou S.-R."/>
            <person name="Plunkett G. III"/>
            <person name="Mayhew G.F."/>
            <person name="Rose D.J."/>
            <person name="Burland V."/>
            <person name="Kodoyianni V."/>
            <person name="Schwartz D.C."/>
            <person name="Blattner F.R."/>
        </authorList>
    </citation>
    <scope>NUCLEOTIDE SEQUENCE [LARGE SCALE GENOMIC DNA]</scope>
    <source>
        <strain>ATCC 700931 / Ty2</strain>
    </source>
</reference>
<feature type="signal peptide" evidence="1">
    <location>
        <begin position="1"/>
        <end position="19"/>
    </location>
</feature>
<feature type="chain" id="PRO_0000030798" description="Endolytic peptidoglycan transglycosylase RlpA" evidence="1">
    <location>
        <begin position="20"/>
        <end position="377"/>
    </location>
</feature>
<feature type="domain" description="SPOR" evidence="1">
    <location>
        <begin position="300"/>
        <end position="376"/>
    </location>
</feature>
<feature type="region of interest" description="Disordered" evidence="2">
    <location>
        <begin position="196"/>
        <end position="277"/>
    </location>
</feature>
<feature type="compositionally biased region" description="Low complexity" evidence="2">
    <location>
        <begin position="208"/>
        <end position="218"/>
    </location>
</feature>
<feature type="compositionally biased region" description="Low complexity" evidence="2">
    <location>
        <begin position="264"/>
        <end position="277"/>
    </location>
</feature>
<feature type="lipid moiety-binding region" description="N-palmitoyl cysteine" evidence="1">
    <location>
        <position position="20"/>
    </location>
</feature>
<feature type="lipid moiety-binding region" description="S-diacylglycerol cysteine" evidence="1">
    <location>
        <position position="20"/>
    </location>
</feature>
<sequence length="377" mass="38769">MHKQLPVICVAAGIVLLAACTNDGGQQQTTVAPQPAVCNGPTVEISGAEPRYEPLNPTANQDYQRDGKSYKIVQDPSRFSQAGLAAIYDAEPGSNLTASGEMFDPMQLTAAHPTLPIPSYARITNLANGRMIVVRINDRGLYGTDRVISLSRAAADRLNTSNNTKVRIDPIIVAPDGSLSGPGMACTTVAKQTYALPPRPDLSGGMGSASSAPAQPQGDVLPVSNSTLKSDDTTGAPVSSSGFLGAPTTLAPGVLEGNEPTPAPQTAPVSAPVTAPATATPVSAPAAAAPVSAPVSAPAAAASGRFVVQVGAVSDQTRAQQYQQRLSQQFSVPGRVIQNGAVWRIQLGPFASKAEASALQQRLQTEAQLQSFIASAQ</sequence>